<gene>
    <name type="primary">tetQ</name>
    <name type="synonym">tet(Q)</name>
</gene>
<keyword id="KW-0046">Antibiotic resistance</keyword>
<keyword id="KW-0342">GTP-binding</keyword>
<keyword id="KW-0547">Nucleotide-binding</keyword>
<keyword id="KW-0648">Protein biosynthesis</keyword>
<name>TETQ_BACT4</name>
<evidence type="ECO:0000250" key="1"/>
<evidence type="ECO:0000255" key="2">
    <source>
        <dbReference type="PROSITE-ProRule" id="PRU01059"/>
    </source>
</evidence>
<protein>
    <recommendedName>
        <fullName>Tetracycline resistance protein TetQ</fullName>
    </recommendedName>
    <alternativeName>
        <fullName>TetA(Q)1</fullName>
    </alternativeName>
</protein>
<feature type="chain" id="PRO_0000091511" description="Tetracycline resistance protein TetQ">
    <location>
        <begin position="1"/>
        <end position="641"/>
    </location>
</feature>
<feature type="domain" description="tr-type G" evidence="2">
    <location>
        <begin position="1"/>
        <end position="244"/>
    </location>
</feature>
<feature type="binding site" evidence="1">
    <location>
        <begin position="10"/>
        <end position="17"/>
    </location>
    <ligand>
        <name>GTP</name>
        <dbReference type="ChEBI" id="CHEBI:37565"/>
    </ligand>
</feature>
<feature type="binding site" evidence="1">
    <location>
        <begin position="74"/>
        <end position="78"/>
    </location>
    <ligand>
        <name>GTP</name>
        <dbReference type="ChEBI" id="CHEBI:37565"/>
    </ligand>
</feature>
<feature type="binding site" evidence="1">
    <location>
        <begin position="128"/>
        <end position="131"/>
    </location>
    <ligand>
        <name>GTP</name>
        <dbReference type="ChEBI" id="CHEBI:37565"/>
    </ligand>
</feature>
<dbReference type="EMBL" id="X58717">
    <property type="protein sequence ID" value="CAA41552.1"/>
    <property type="molecule type" value="Genomic_DNA"/>
</dbReference>
<dbReference type="EMBL" id="M81439">
    <property type="protein sequence ID" value="AAA22919.1"/>
    <property type="molecule type" value="Genomic_DNA"/>
</dbReference>
<dbReference type="PIR" id="S23757">
    <property type="entry name" value="S23757"/>
</dbReference>
<dbReference type="RefSeq" id="WP_004293868.1">
    <property type="nucleotide sequence ID" value="NZ_VDVH01000013.1"/>
</dbReference>
<dbReference type="SMR" id="Q00937"/>
<dbReference type="GeneID" id="71570164"/>
<dbReference type="GO" id="GO:0005525">
    <property type="term" value="F:GTP binding"/>
    <property type="evidence" value="ECO:0007669"/>
    <property type="project" value="UniProtKB-KW"/>
</dbReference>
<dbReference type="GO" id="GO:0003924">
    <property type="term" value="F:GTPase activity"/>
    <property type="evidence" value="ECO:0007669"/>
    <property type="project" value="InterPro"/>
</dbReference>
<dbReference type="GO" id="GO:0046677">
    <property type="term" value="P:response to antibiotic"/>
    <property type="evidence" value="ECO:0007669"/>
    <property type="project" value="UniProtKB-KW"/>
</dbReference>
<dbReference type="GO" id="GO:0032790">
    <property type="term" value="P:ribosome disassembly"/>
    <property type="evidence" value="ECO:0007669"/>
    <property type="project" value="TreeGrafter"/>
</dbReference>
<dbReference type="GO" id="GO:0006412">
    <property type="term" value="P:translation"/>
    <property type="evidence" value="ECO:0007669"/>
    <property type="project" value="UniProtKB-KW"/>
</dbReference>
<dbReference type="CDD" id="cd03711">
    <property type="entry name" value="Tet_C"/>
    <property type="match status" value="1"/>
</dbReference>
<dbReference type="CDD" id="cd03690">
    <property type="entry name" value="Tet_II"/>
    <property type="match status" value="1"/>
</dbReference>
<dbReference type="CDD" id="cd16258">
    <property type="entry name" value="Tet_III"/>
    <property type="match status" value="1"/>
</dbReference>
<dbReference type="CDD" id="cd01684">
    <property type="entry name" value="Tet_like_IV"/>
    <property type="match status" value="1"/>
</dbReference>
<dbReference type="CDD" id="cd04168">
    <property type="entry name" value="TetM_like"/>
    <property type="match status" value="1"/>
</dbReference>
<dbReference type="Gene3D" id="3.30.230.10">
    <property type="match status" value="1"/>
</dbReference>
<dbReference type="Gene3D" id="3.30.70.240">
    <property type="match status" value="1"/>
</dbReference>
<dbReference type="Gene3D" id="3.30.70.870">
    <property type="entry name" value="Elongation Factor G (Translational Gtpase), domain 3"/>
    <property type="match status" value="1"/>
</dbReference>
<dbReference type="Gene3D" id="3.40.50.300">
    <property type="entry name" value="P-loop containing nucleotide triphosphate hydrolases"/>
    <property type="match status" value="1"/>
</dbReference>
<dbReference type="Gene3D" id="2.40.30.10">
    <property type="entry name" value="Translation factors"/>
    <property type="match status" value="1"/>
</dbReference>
<dbReference type="InterPro" id="IPR041095">
    <property type="entry name" value="EFG_II"/>
</dbReference>
<dbReference type="InterPro" id="IPR035647">
    <property type="entry name" value="EFG_III/V"/>
</dbReference>
<dbReference type="InterPro" id="IPR000640">
    <property type="entry name" value="EFG_V-like"/>
</dbReference>
<dbReference type="InterPro" id="IPR031157">
    <property type="entry name" value="G_TR_CS"/>
</dbReference>
<dbReference type="InterPro" id="IPR027417">
    <property type="entry name" value="P-loop_NTPase"/>
</dbReference>
<dbReference type="InterPro" id="IPR020568">
    <property type="entry name" value="Ribosomal_Su5_D2-typ_SF"/>
</dbReference>
<dbReference type="InterPro" id="IPR014721">
    <property type="entry name" value="Ribsml_uS5_D2-typ_fold_subgr"/>
</dbReference>
<dbReference type="InterPro" id="IPR005225">
    <property type="entry name" value="Small_GTP-bd"/>
</dbReference>
<dbReference type="InterPro" id="IPR000795">
    <property type="entry name" value="T_Tr_GTP-bd_dom"/>
</dbReference>
<dbReference type="InterPro" id="IPR035650">
    <property type="entry name" value="Tet_C"/>
</dbReference>
<dbReference type="InterPro" id="IPR009000">
    <property type="entry name" value="Transl_B-barrel_sf"/>
</dbReference>
<dbReference type="InterPro" id="IPR005517">
    <property type="entry name" value="Transl_elong_EFG/EF2_IV"/>
</dbReference>
<dbReference type="NCBIfam" id="TIGR00231">
    <property type="entry name" value="small_GTP"/>
    <property type="match status" value="1"/>
</dbReference>
<dbReference type="NCBIfam" id="NF012153">
    <property type="entry name" value="tet_protect"/>
    <property type="match status" value="1"/>
</dbReference>
<dbReference type="NCBIfam" id="NF012154">
    <property type="entry name" value="tet_protect_Q"/>
    <property type="match status" value="1"/>
</dbReference>
<dbReference type="PANTHER" id="PTHR43261:SF1">
    <property type="entry name" value="RIBOSOME-RELEASING FACTOR 2, MITOCHONDRIAL"/>
    <property type="match status" value="1"/>
</dbReference>
<dbReference type="PANTHER" id="PTHR43261">
    <property type="entry name" value="TRANSLATION ELONGATION FACTOR G-RELATED"/>
    <property type="match status" value="1"/>
</dbReference>
<dbReference type="Pfam" id="PF00679">
    <property type="entry name" value="EFG_C"/>
    <property type="match status" value="1"/>
</dbReference>
<dbReference type="Pfam" id="PF14492">
    <property type="entry name" value="EFG_III"/>
    <property type="match status" value="1"/>
</dbReference>
<dbReference type="Pfam" id="PF03764">
    <property type="entry name" value="EFG_IV"/>
    <property type="match status" value="1"/>
</dbReference>
<dbReference type="Pfam" id="PF00009">
    <property type="entry name" value="GTP_EFTU"/>
    <property type="match status" value="1"/>
</dbReference>
<dbReference type="PRINTS" id="PR00315">
    <property type="entry name" value="ELONGATNFCT"/>
</dbReference>
<dbReference type="PRINTS" id="PR01037">
    <property type="entry name" value="TCRTETOQM"/>
</dbReference>
<dbReference type="SMART" id="SM00838">
    <property type="entry name" value="EFG_C"/>
    <property type="match status" value="1"/>
</dbReference>
<dbReference type="SMART" id="SM00889">
    <property type="entry name" value="EFG_IV"/>
    <property type="match status" value="1"/>
</dbReference>
<dbReference type="SUPFAM" id="SSF54980">
    <property type="entry name" value="EF-G C-terminal domain-like"/>
    <property type="match status" value="2"/>
</dbReference>
<dbReference type="SUPFAM" id="SSF52540">
    <property type="entry name" value="P-loop containing nucleoside triphosphate hydrolases"/>
    <property type="match status" value="1"/>
</dbReference>
<dbReference type="SUPFAM" id="SSF54211">
    <property type="entry name" value="Ribosomal protein S5 domain 2-like"/>
    <property type="match status" value="1"/>
</dbReference>
<dbReference type="SUPFAM" id="SSF50447">
    <property type="entry name" value="Translation proteins"/>
    <property type="match status" value="1"/>
</dbReference>
<dbReference type="PROSITE" id="PS00301">
    <property type="entry name" value="G_TR_1"/>
    <property type="match status" value="1"/>
</dbReference>
<dbReference type="PROSITE" id="PS51722">
    <property type="entry name" value="G_TR_2"/>
    <property type="match status" value="1"/>
</dbReference>
<organism>
    <name type="scientific">Bacteroides thetaiotaomicron</name>
    <dbReference type="NCBI Taxonomy" id="818"/>
    <lineage>
        <taxon>Bacteria</taxon>
        <taxon>Pseudomonadati</taxon>
        <taxon>Bacteroidota</taxon>
        <taxon>Bacteroidia</taxon>
        <taxon>Bacteroidales</taxon>
        <taxon>Bacteroidaceae</taxon>
        <taxon>Bacteroides</taxon>
    </lineage>
</organism>
<proteinExistence type="inferred from homology"/>
<accession>Q00937</accession>
<comment type="function">
    <text>Abolishes the inhibitory effect of tetracyclin on protein synthesis by a non-covalent modification of the ribosomes.</text>
</comment>
<comment type="similarity">
    <text evidence="2">Belongs to the TRAFAC class translation factor GTPase superfamily. Classic translation factor GTPase family. TetM/TetO subfamily.</text>
</comment>
<sequence>MNIINLGILAHIDAGKTSVTENLLFASGATEKCGCVDNGDTITDSMDIEKRRGITVRASTTSIIWNGVKCNIIDTPGHMDFIAEVERTFKMLDGAVLILSAKEGIQAQTKLLFNTLQKLQIPTIIFINKIDRAGVNLERLYLDIKANLSQDVLFMQNVVDGSVYPVCSQTYIKEEYKEFVCNHDDNILERYLADSEISPADYWNTIIALVAKAKVYPVLHGSAMFNIGINELLDAITSFILPPASVSNRLSSYLYKIEHDPKGHKRSFLKIIDGSLRLRDVVRINDSEKFIKIKNLKTINQGREINVDEVGANDIAIVEDMDDFRIGNYLGAEPCLIQGLSHQHPALKSSVRPDRPEERSKVISALNTLWIEDPSLSFSINSYSDELEISLYGLTQKEIIQTLLEERFSVKVHFDEIKTIYKERPVKKVNKIIQIEVPPNPYWATIGLTLEPLPLGTGLQIESDISYGYLNHSFQNAVFEGIRMSCQSGLHGWEVTDLKVTFTQAEYYSPVSTPADFRQLTPYVFRLALQQSGVDILEPMLYFELQIPQAASSKAITDLQKMMSEIEDISCNNEWCHIKGKVPLNTSKDYASEVSSYTKGLGIFMVKPCGYQITKGGYSDNIRMNEKDKLLFMFQKSMSSK</sequence>
<reference key="1">
    <citation type="journal article" date="1992" name="Antimicrob. Agents Chemother.">
        <title>A Bacteroides tetracycline resistance gene represents a new class of ribosome protection tetracycline resistance.</title>
        <authorList>
            <person name="Nikolich M.P."/>
            <person name="Shoemaker N.B."/>
            <person name="Salyers A.A."/>
        </authorList>
    </citation>
    <scope>NUCLEOTIDE SEQUENCE [GENOMIC DNA]</scope>
    <source>
        <strain>DOT</strain>
    </source>
</reference>
<reference key="2">
    <citation type="journal article" date="1992" name="J. Bacteriol.">
        <title>Genes involved in production of plasmidlike forms by a Bacteroides conjugal chromosomal element share amino acid homology with two-component regulatory systems.</title>
        <authorList>
            <person name="Stevens A.M."/>
            <person name="Sanders J.M."/>
            <person name="Shoemaker N.B."/>
            <person name="Salyers A.A."/>
        </authorList>
    </citation>
    <scope>NUCLEOTIDE SEQUENCE [GENOMIC DNA] OF 601-641</scope>
</reference>